<comment type="function">
    <text evidence="1">DNA-dependent RNA polymerase catalyzes the transcription of DNA into RNA using the four ribonucleoside triphosphates as substrates.</text>
</comment>
<comment type="catalytic activity">
    <reaction evidence="1">
        <text>RNA(n) + a ribonucleoside 5'-triphosphate = RNA(n+1) + diphosphate</text>
        <dbReference type="Rhea" id="RHEA:21248"/>
        <dbReference type="Rhea" id="RHEA-COMP:14527"/>
        <dbReference type="Rhea" id="RHEA-COMP:17342"/>
        <dbReference type="ChEBI" id="CHEBI:33019"/>
        <dbReference type="ChEBI" id="CHEBI:61557"/>
        <dbReference type="ChEBI" id="CHEBI:140395"/>
        <dbReference type="EC" id="2.7.7.6"/>
    </reaction>
</comment>
<comment type="subunit">
    <text evidence="1">The RNAP catalytic core consists of 2 alpha, 1 beta, 1 beta' and 1 omega subunit. When a sigma factor is associated with the core the holoenzyme is formed, which can initiate transcription.</text>
</comment>
<comment type="similarity">
    <text evidence="1">Belongs to the RNA polymerase beta chain family.</text>
</comment>
<sequence>MAVAEAKPQYSHAEKKRFRKSFGKQTDIMPIPNLLEIQLKSYRDFLQTDTKLSEQLNTGLHAAFSSVFPIESFSGNARLEYVGYKLGEPAFDVRECKLRGLTYSAPLRVKIRLVVLDKDASDDPKPIKDIREQDVFMGEIPLMTDVGTFVVNGTERVVVSQLHRSPGVIFEHDKGKTHSSGKLLYSARIIPYRGSWLDFEFDPKDCVYVRIDRRRKLPVTILLRALGYEAEDILNEFFETTCCHLKNGEYHIDLIPQRLRGEIASFDIHVPETGELIVEQGRRITARHIKQMEKSQMQDLVVPRDYLIGKTLAKNIIDTSTGEFLAQANDEITEELLDAMASHGILQIDMIYTNDLDHGSYISDTLKIDPTGSQLEALVEIYRMMRPGEPPTKEAAEALFKNLFFVEERYDLSAVGRMKFNRRVGIKSDEGPGTLTKEDILSVIKTLIDIRNGIGMVDDIDHLGNRRVRSVGEMTENQFRVGLVRVERAVKERLSLVESENLMPQDLINAKPVSAAIKEFFGSSQLSQFMDQVNPLSGVTHKRRVSALGPGGLTRERAGFEVRDVHTTHYGRVCPIETPEGPNIGLINSLSVYARTNEYGFIETPCRKVVNGRVTDEVEYLSAIEEVDQYIAQSNVELDAQGNILADLVPCRHQNEFSLTTPDKINYMDVSPKQIVSVAASLIPFLEHDDANRALMGSNMQRQAVPTLRSEKPLVGTGMERIVASDSGVSVVAKRGGVIDLVDASRIVVRVNDDETTAGETGVDIYNLTKYFRSNQDTCINQRPIVSTGDRIQRGDVLADGPCTDMGELALGQNLLVAFMPWNGYNFEDSILISERIVHDDRFTTIHIEELTCIARDTKLGTEEITADIPNVGESALSNLDESGVVYIGAEVKAGDILVGKVTPKGETQLTPEEKLLRAIFGEKASDVKDSSLRVPSGMNGTVIDVQVFTRDGLEKDARAKSIEEEHLARVRKDLIDERRIREEDIYHRVSHLLLDKVATGGPGSLKPGSKITQDYLDKVEREKWFDIRIEDDAISQQLEQLSKQLELLTKEMEKRFNDSRKKIIQGDDLAPGVLKIVKVYLAVKRRIQPGDKMAGRHGNKGVISIVVPVEDMPHMEDGTAVDIVLNPLGVPSRMNIGQVLETHLGLAAKGLGRKIAQMLDEKQTPEAIKAYLEKIYNHDGVQRVNLKCLNDDELMTLADNLRAGVPMATPVFDGATEQEIKSMLQLADLPADGKTVLIDGRTGNKFDNPVTVGYMYMLKLNHLVDDKMHARSTGSYSLVTQQPLGGKAQFGGQRFGEMEVWALEAYGAAYTLQEMLTVKSDDVGGRTKIYKNIVDGDHRMDPGMPESFNVLLKEIRALGIDIELEHD</sequence>
<feature type="chain" id="PRO_0000224067" description="DNA-directed RNA polymerase subunit beta">
    <location>
        <begin position="1"/>
        <end position="1368"/>
    </location>
</feature>
<proteinExistence type="inferred from homology"/>
<reference key="1">
    <citation type="journal article" date="2004" name="Nat. Genet.">
        <title>Evidence in the Legionella pneumophila genome for exploitation of host cell functions and high genome plasticity.</title>
        <authorList>
            <person name="Cazalet C."/>
            <person name="Rusniok C."/>
            <person name="Brueggemann H."/>
            <person name="Zidane N."/>
            <person name="Magnier A."/>
            <person name="Ma L."/>
            <person name="Tichit M."/>
            <person name="Jarraud S."/>
            <person name="Bouchier C."/>
            <person name="Vandenesch F."/>
            <person name="Kunst F."/>
            <person name="Etienne J."/>
            <person name="Glaser P."/>
            <person name="Buchrieser C."/>
        </authorList>
    </citation>
    <scope>NUCLEOTIDE SEQUENCE [LARGE SCALE GENOMIC DNA]</scope>
    <source>
        <strain>Lens</strain>
    </source>
</reference>
<name>RPOB_LEGPL</name>
<keyword id="KW-0240">DNA-directed RNA polymerase</keyword>
<keyword id="KW-0548">Nucleotidyltransferase</keyword>
<keyword id="KW-0804">Transcription</keyword>
<keyword id="KW-0808">Transferase</keyword>
<gene>
    <name evidence="1" type="primary">rpoB</name>
    <name type="ordered locus">lpl0362</name>
</gene>
<protein>
    <recommendedName>
        <fullName evidence="1">DNA-directed RNA polymerase subunit beta</fullName>
        <shortName evidence="1">RNAP subunit beta</shortName>
        <ecNumber evidence="1">2.7.7.6</ecNumber>
    </recommendedName>
    <alternativeName>
        <fullName evidence="1">RNA polymerase subunit beta</fullName>
    </alternativeName>
    <alternativeName>
        <fullName evidence="1">Transcriptase subunit beta</fullName>
    </alternativeName>
</protein>
<accession>Q5WZL9</accession>
<organism>
    <name type="scientific">Legionella pneumophila (strain Lens)</name>
    <dbReference type="NCBI Taxonomy" id="297245"/>
    <lineage>
        <taxon>Bacteria</taxon>
        <taxon>Pseudomonadati</taxon>
        <taxon>Pseudomonadota</taxon>
        <taxon>Gammaproteobacteria</taxon>
        <taxon>Legionellales</taxon>
        <taxon>Legionellaceae</taxon>
        <taxon>Legionella</taxon>
    </lineage>
</organism>
<evidence type="ECO:0000255" key="1">
    <source>
        <dbReference type="HAMAP-Rule" id="MF_01321"/>
    </source>
</evidence>
<dbReference type="EC" id="2.7.7.6" evidence="1"/>
<dbReference type="EMBL" id="CR628337">
    <property type="protein sequence ID" value="CAH14593.1"/>
    <property type="molecule type" value="Genomic_DNA"/>
</dbReference>
<dbReference type="RefSeq" id="WP_011214621.1">
    <property type="nucleotide sequence ID" value="NC_006369.1"/>
</dbReference>
<dbReference type="SMR" id="Q5WZL9"/>
<dbReference type="KEGG" id="lpf:lpl0362"/>
<dbReference type="LegioList" id="lpl0362"/>
<dbReference type="HOGENOM" id="CLU_000524_4_3_6"/>
<dbReference type="Proteomes" id="UP000002517">
    <property type="component" value="Chromosome"/>
</dbReference>
<dbReference type="GO" id="GO:0000428">
    <property type="term" value="C:DNA-directed RNA polymerase complex"/>
    <property type="evidence" value="ECO:0007669"/>
    <property type="project" value="UniProtKB-KW"/>
</dbReference>
<dbReference type="GO" id="GO:0003677">
    <property type="term" value="F:DNA binding"/>
    <property type="evidence" value="ECO:0007669"/>
    <property type="project" value="UniProtKB-UniRule"/>
</dbReference>
<dbReference type="GO" id="GO:0003899">
    <property type="term" value="F:DNA-directed RNA polymerase activity"/>
    <property type="evidence" value="ECO:0007669"/>
    <property type="project" value="UniProtKB-UniRule"/>
</dbReference>
<dbReference type="GO" id="GO:0032549">
    <property type="term" value="F:ribonucleoside binding"/>
    <property type="evidence" value="ECO:0007669"/>
    <property type="project" value="InterPro"/>
</dbReference>
<dbReference type="GO" id="GO:0006351">
    <property type="term" value="P:DNA-templated transcription"/>
    <property type="evidence" value="ECO:0007669"/>
    <property type="project" value="UniProtKB-UniRule"/>
</dbReference>
<dbReference type="CDD" id="cd00653">
    <property type="entry name" value="RNA_pol_B_RPB2"/>
    <property type="match status" value="1"/>
</dbReference>
<dbReference type="FunFam" id="2.40.50.100:FF:000006">
    <property type="entry name" value="DNA-directed RNA polymerase subunit beta"/>
    <property type="match status" value="1"/>
</dbReference>
<dbReference type="FunFam" id="2.40.50.150:FF:000001">
    <property type="entry name" value="DNA-directed RNA polymerase subunit beta"/>
    <property type="match status" value="1"/>
</dbReference>
<dbReference type="FunFam" id="3.90.1800.10:FF:000001">
    <property type="entry name" value="DNA-directed RNA polymerase subunit beta"/>
    <property type="match status" value="1"/>
</dbReference>
<dbReference type="Gene3D" id="2.40.50.100">
    <property type="match status" value="1"/>
</dbReference>
<dbReference type="Gene3D" id="2.40.50.150">
    <property type="match status" value="1"/>
</dbReference>
<dbReference type="Gene3D" id="3.90.1100.10">
    <property type="match status" value="2"/>
</dbReference>
<dbReference type="Gene3D" id="2.30.150.10">
    <property type="entry name" value="DNA-directed RNA polymerase, beta subunit, external 1 domain"/>
    <property type="match status" value="1"/>
</dbReference>
<dbReference type="Gene3D" id="2.40.270.10">
    <property type="entry name" value="DNA-directed RNA polymerase, subunit 2, domain 6"/>
    <property type="match status" value="2"/>
</dbReference>
<dbReference type="Gene3D" id="3.90.1800.10">
    <property type="entry name" value="RNA polymerase alpha subunit dimerisation domain"/>
    <property type="match status" value="1"/>
</dbReference>
<dbReference type="Gene3D" id="3.90.1110.10">
    <property type="entry name" value="RNA polymerase Rpb2, domain 2"/>
    <property type="match status" value="2"/>
</dbReference>
<dbReference type="HAMAP" id="MF_01321">
    <property type="entry name" value="RNApol_bact_RpoB"/>
    <property type="match status" value="1"/>
</dbReference>
<dbReference type="InterPro" id="IPR042107">
    <property type="entry name" value="DNA-dir_RNA_pol_bsu_ext_1_sf"/>
</dbReference>
<dbReference type="InterPro" id="IPR019462">
    <property type="entry name" value="DNA-dir_RNA_pol_bsu_external_1"/>
</dbReference>
<dbReference type="InterPro" id="IPR015712">
    <property type="entry name" value="DNA-dir_RNA_pol_su2"/>
</dbReference>
<dbReference type="InterPro" id="IPR007120">
    <property type="entry name" value="DNA-dir_RNAP_su2_dom"/>
</dbReference>
<dbReference type="InterPro" id="IPR037033">
    <property type="entry name" value="DNA-dir_RNAP_su2_hyb_sf"/>
</dbReference>
<dbReference type="InterPro" id="IPR010243">
    <property type="entry name" value="RNA_pol_bsu_bac"/>
</dbReference>
<dbReference type="InterPro" id="IPR007121">
    <property type="entry name" value="RNA_pol_bsu_CS"/>
</dbReference>
<dbReference type="InterPro" id="IPR007644">
    <property type="entry name" value="RNA_pol_bsu_protrusion"/>
</dbReference>
<dbReference type="InterPro" id="IPR007642">
    <property type="entry name" value="RNA_pol_Rpb2_2"/>
</dbReference>
<dbReference type="InterPro" id="IPR037034">
    <property type="entry name" value="RNA_pol_Rpb2_2_sf"/>
</dbReference>
<dbReference type="InterPro" id="IPR007645">
    <property type="entry name" value="RNA_pol_Rpb2_3"/>
</dbReference>
<dbReference type="InterPro" id="IPR007641">
    <property type="entry name" value="RNA_pol_Rpb2_7"/>
</dbReference>
<dbReference type="InterPro" id="IPR014724">
    <property type="entry name" value="RNA_pol_RPB2_OB-fold"/>
</dbReference>
<dbReference type="NCBIfam" id="NF001616">
    <property type="entry name" value="PRK00405.1"/>
    <property type="match status" value="1"/>
</dbReference>
<dbReference type="NCBIfam" id="TIGR02013">
    <property type="entry name" value="rpoB"/>
    <property type="match status" value="1"/>
</dbReference>
<dbReference type="PANTHER" id="PTHR20856">
    <property type="entry name" value="DNA-DIRECTED RNA POLYMERASE I SUBUNIT 2"/>
    <property type="match status" value="1"/>
</dbReference>
<dbReference type="Pfam" id="PF04563">
    <property type="entry name" value="RNA_pol_Rpb2_1"/>
    <property type="match status" value="1"/>
</dbReference>
<dbReference type="Pfam" id="PF04561">
    <property type="entry name" value="RNA_pol_Rpb2_2"/>
    <property type="match status" value="2"/>
</dbReference>
<dbReference type="Pfam" id="PF04565">
    <property type="entry name" value="RNA_pol_Rpb2_3"/>
    <property type="match status" value="1"/>
</dbReference>
<dbReference type="Pfam" id="PF10385">
    <property type="entry name" value="RNA_pol_Rpb2_45"/>
    <property type="match status" value="1"/>
</dbReference>
<dbReference type="Pfam" id="PF00562">
    <property type="entry name" value="RNA_pol_Rpb2_6"/>
    <property type="match status" value="1"/>
</dbReference>
<dbReference type="Pfam" id="PF04560">
    <property type="entry name" value="RNA_pol_Rpb2_7"/>
    <property type="match status" value="1"/>
</dbReference>
<dbReference type="SUPFAM" id="SSF64484">
    <property type="entry name" value="beta and beta-prime subunits of DNA dependent RNA-polymerase"/>
    <property type="match status" value="1"/>
</dbReference>
<dbReference type="PROSITE" id="PS01166">
    <property type="entry name" value="RNA_POL_BETA"/>
    <property type="match status" value="1"/>
</dbReference>